<organism>
    <name type="scientific">Chlamydia muridarum (strain MoPn / Nigg)</name>
    <dbReference type="NCBI Taxonomy" id="243161"/>
    <lineage>
        <taxon>Bacteria</taxon>
        <taxon>Pseudomonadati</taxon>
        <taxon>Chlamydiota</taxon>
        <taxon>Chlamydiia</taxon>
        <taxon>Chlamydiales</taxon>
        <taxon>Chlamydiaceae</taxon>
        <taxon>Chlamydia/Chlamydophila group</taxon>
        <taxon>Chlamydia</taxon>
    </lineage>
</organism>
<sequence length="141" mass="15235">MEQTLSIIKPDSVGKAHIGEIVSIFEKAGLRIAAMKMVHLSVKEAEGFYAVHKERPFFQELVDFMISGPVVVMVLQGENAVARNRELMGATNPKEAAEGSIRALFGESIGVNAVHGSDSLENAAIEVSYFFAKTEIVNALA</sequence>
<name>NDK_CHLMU</name>
<dbReference type="EC" id="2.7.4.6" evidence="1"/>
<dbReference type="EMBL" id="AE002160">
    <property type="protein sequence ID" value="AAF39590.1"/>
    <property type="molecule type" value="Genomic_DNA"/>
</dbReference>
<dbReference type="PIR" id="C81666">
    <property type="entry name" value="C81666"/>
</dbReference>
<dbReference type="RefSeq" id="WP_010231549.1">
    <property type="nucleotide sequence ID" value="NZ_CP063055.1"/>
</dbReference>
<dbReference type="SMR" id="Q9PJP1"/>
<dbReference type="GeneID" id="1246153"/>
<dbReference type="KEGG" id="cmu:TC_0787"/>
<dbReference type="eggNOG" id="COG0105">
    <property type="taxonomic scope" value="Bacteria"/>
</dbReference>
<dbReference type="HOGENOM" id="CLU_060216_8_1_0"/>
<dbReference type="OrthoDB" id="9801161at2"/>
<dbReference type="Proteomes" id="UP000000800">
    <property type="component" value="Chromosome"/>
</dbReference>
<dbReference type="GO" id="GO:0005737">
    <property type="term" value="C:cytoplasm"/>
    <property type="evidence" value="ECO:0007669"/>
    <property type="project" value="UniProtKB-SubCell"/>
</dbReference>
<dbReference type="GO" id="GO:0005524">
    <property type="term" value="F:ATP binding"/>
    <property type="evidence" value="ECO:0007669"/>
    <property type="project" value="UniProtKB-UniRule"/>
</dbReference>
<dbReference type="GO" id="GO:0046872">
    <property type="term" value="F:metal ion binding"/>
    <property type="evidence" value="ECO:0007669"/>
    <property type="project" value="UniProtKB-KW"/>
</dbReference>
<dbReference type="GO" id="GO:0004550">
    <property type="term" value="F:nucleoside diphosphate kinase activity"/>
    <property type="evidence" value="ECO:0007669"/>
    <property type="project" value="UniProtKB-UniRule"/>
</dbReference>
<dbReference type="GO" id="GO:0006241">
    <property type="term" value="P:CTP biosynthetic process"/>
    <property type="evidence" value="ECO:0007669"/>
    <property type="project" value="UniProtKB-UniRule"/>
</dbReference>
<dbReference type="GO" id="GO:0006183">
    <property type="term" value="P:GTP biosynthetic process"/>
    <property type="evidence" value="ECO:0007669"/>
    <property type="project" value="UniProtKB-UniRule"/>
</dbReference>
<dbReference type="GO" id="GO:0006228">
    <property type="term" value="P:UTP biosynthetic process"/>
    <property type="evidence" value="ECO:0007669"/>
    <property type="project" value="UniProtKB-UniRule"/>
</dbReference>
<dbReference type="CDD" id="cd04413">
    <property type="entry name" value="NDPk_I"/>
    <property type="match status" value="1"/>
</dbReference>
<dbReference type="FunFam" id="3.30.70.141:FF:000001">
    <property type="entry name" value="Nucleoside diphosphate kinase"/>
    <property type="match status" value="1"/>
</dbReference>
<dbReference type="Gene3D" id="3.30.70.141">
    <property type="entry name" value="Nucleoside diphosphate kinase-like domain"/>
    <property type="match status" value="1"/>
</dbReference>
<dbReference type="HAMAP" id="MF_00451">
    <property type="entry name" value="NDP_kinase"/>
    <property type="match status" value="1"/>
</dbReference>
<dbReference type="InterPro" id="IPR034907">
    <property type="entry name" value="NDK-like_dom"/>
</dbReference>
<dbReference type="InterPro" id="IPR036850">
    <property type="entry name" value="NDK-like_dom_sf"/>
</dbReference>
<dbReference type="InterPro" id="IPR001564">
    <property type="entry name" value="Nucleoside_diP_kinase"/>
</dbReference>
<dbReference type="InterPro" id="IPR023005">
    <property type="entry name" value="Nucleoside_diP_kinase_AS"/>
</dbReference>
<dbReference type="NCBIfam" id="NF001908">
    <property type="entry name" value="PRK00668.1"/>
    <property type="match status" value="1"/>
</dbReference>
<dbReference type="PANTHER" id="PTHR46161">
    <property type="entry name" value="NUCLEOSIDE DIPHOSPHATE KINASE"/>
    <property type="match status" value="1"/>
</dbReference>
<dbReference type="PANTHER" id="PTHR46161:SF3">
    <property type="entry name" value="NUCLEOSIDE DIPHOSPHATE KINASE DDB_G0292928-RELATED"/>
    <property type="match status" value="1"/>
</dbReference>
<dbReference type="Pfam" id="PF00334">
    <property type="entry name" value="NDK"/>
    <property type="match status" value="1"/>
</dbReference>
<dbReference type="PRINTS" id="PR01243">
    <property type="entry name" value="NUCDPKINASE"/>
</dbReference>
<dbReference type="SMART" id="SM00562">
    <property type="entry name" value="NDK"/>
    <property type="match status" value="1"/>
</dbReference>
<dbReference type="SUPFAM" id="SSF54919">
    <property type="entry name" value="Nucleoside diphosphate kinase, NDK"/>
    <property type="match status" value="1"/>
</dbReference>
<dbReference type="PROSITE" id="PS00469">
    <property type="entry name" value="NDPK"/>
    <property type="match status" value="1"/>
</dbReference>
<dbReference type="PROSITE" id="PS51374">
    <property type="entry name" value="NDPK_LIKE"/>
    <property type="match status" value="1"/>
</dbReference>
<gene>
    <name evidence="1" type="primary">ndk</name>
    <name type="ordered locus">TC_0787</name>
</gene>
<feature type="chain" id="PRO_0000136965" description="Nucleoside diphosphate kinase">
    <location>
        <begin position="1"/>
        <end position="141"/>
    </location>
</feature>
<feature type="active site" description="Pros-phosphohistidine intermediate" evidence="1">
    <location>
        <position position="115"/>
    </location>
</feature>
<feature type="binding site" evidence="1">
    <location>
        <position position="9"/>
    </location>
    <ligand>
        <name>ATP</name>
        <dbReference type="ChEBI" id="CHEBI:30616"/>
    </ligand>
</feature>
<feature type="binding site" evidence="1">
    <location>
        <position position="57"/>
    </location>
    <ligand>
        <name>ATP</name>
        <dbReference type="ChEBI" id="CHEBI:30616"/>
    </ligand>
</feature>
<feature type="binding site" evidence="1">
    <location>
        <position position="85"/>
    </location>
    <ligand>
        <name>ATP</name>
        <dbReference type="ChEBI" id="CHEBI:30616"/>
    </ligand>
</feature>
<feature type="binding site" evidence="1">
    <location>
        <position position="91"/>
    </location>
    <ligand>
        <name>ATP</name>
        <dbReference type="ChEBI" id="CHEBI:30616"/>
    </ligand>
</feature>
<feature type="binding site" evidence="1">
    <location>
        <position position="102"/>
    </location>
    <ligand>
        <name>ATP</name>
        <dbReference type="ChEBI" id="CHEBI:30616"/>
    </ligand>
</feature>
<feature type="binding site" evidence="1">
    <location>
        <position position="112"/>
    </location>
    <ligand>
        <name>ATP</name>
        <dbReference type="ChEBI" id="CHEBI:30616"/>
    </ligand>
</feature>
<keyword id="KW-0067">ATP-binding</keyword>
<keyword id="KW-0963">Cytoplasm</keyword>
<keyword id="KW-0418">Kinase</keyword>
<keyword id="KW-0460">Magnesium</keyword>
<keyword id="KW-0479">Metal-binding</keyword>
<keyword id="KW-0546">Nucleotide metabolism</keyword>
<keyword id="KW-0547">Nucleotide-binding</keyword>
<keyword id="KW-0597">Phosphoprotein</keyword>
<keyword id="KW-0808">Transferase</keyword>
<evidence type="ECO:0000255" key="1">
    <source>
        <dbReference type="HAMAP-Rule" id="MF_00451"/>
    </source>
</evidence>
<evidence type="ECO:0000305" key="2"/>
<comment type="function">
    <text evidence="1">Major role in the synthesis of nucleoside triphosphates other than ATP. The ATP gamma phosphate is transferred to the NDP beta phosphate via a ping-pong mechanism, using a phosphorylated active-site intermediate.</text>
</comment>
<comment type="catalytic activity">
    <reaction evidence="1">
        <text>a 2'-deoxyribonucleoside 5'-diphosphate + ATP = a 2'-deoxyribonucleoside 5'-triphosphate + ADP</text>
        <dbReference type="Rhea" id="RHEA:44640"/>
        <dbReference type="ChEBI" id="CHEBI:30616"/>
        <dbReference type="ChEBI" id="CHEBI:61560"/>
        <dbReference type="ChEBI" id="CHEBI:73316"/>
        <dbReference type="ChEBI" id="CHEBI:456216"/>
        <dbReference type="EC" id="2.7.4.6"/>
    </reaction>
</comment>
<comment type="catalytic activity">
    <reaction evidence="1">
        <text>a ribonucleoside 5'-diphosphate + ATP = a ribonucleoside 5'-triphosphate + ADP</text>
        <dbReference type="Rhea" id="RHEA:18113"/>
        <dbReference type="ChEBI" id="CHEBI:30616"/>
        <dbReference type="ChEBI" id="CHEBI:57930"/>
        <dbReference type="ChEBI" id="CHEBI:61557"/>
        <dbReference type="ChEBI" id="CHEBI:456216"/>
        <dbReference type="EC" id="2.7.4.6"/>
    </reaction>
</comment>
<comment type="cofactor">
    <cofactor evidence="1">
        <name>Mg(2+)</name>
        <dbReference type="ChEBI" id="CHEBI:18420"/>
    </cofactor>
</comment>
<comment type="subunit">
    <text evidence="1">Homotetramer.</text>
</comment>
<comment type="subcellular location">
    <subcellularLocation>
        <location evidence="1">Cytoplasm</location>
    </subcellularLocation>
</comment>
<comment type="similarity">
    <text evidence="1 2">Belongs to the NDK family.</text>
</comment>
<reference key="1">
    <citation type="journal article" date="2000" name="Nucleic Acids Res.">
        <title>Genome sequences of Chlamydia trachomatis MoPn and Chlamydia pneumoniae AR39.</title>
        <authorList>
            <person name="Read T.D."/>
            <person name="Brunham R.C."/>
            <person name="Shen C."/>
            <person name="Gill S.R."/>
            <person name="Heidelberg J.F."/>
            <person name="White O."/>
            <person name="Hickey E.K."/>
            <person name="Peterson J.D."/>
            <person name="Utterback T.R."/>
            <person name="Berry K.J."/>
            <person name="Bass S."/>
            <person name="Linher K.D."/>
            <person name="Weidman J.F."/>
            <person name="Khouri H.M."/>
            <person name="Craven B."/>
            <person name="Bowman C."/>
            <person name="Dodson R.J."/>
            <person name="Gwinn M.L."/>
            <person name="Nelson W.C."/>
            <person name="DeBoy R.T."/>
            <person name="Kolonay J.F."/>
            <person name="McClarty G."/>
            <person name="Salzberg S.L."/>
            <person name="Eisen J.A."/>
            <person name="Fraser C.M."/>
        </authorList>
    </citation>
    <scope>NUCLEOTIDE SEQUENCE [LARGE SCALE GENOMIC DNA]</scope>
    <source>
        <strain>MoPn / Nigg</strain>
    </source>
</reference>
<protein>
    <recommendedName>
        <fullName evidence="1">Nucleoside diphosphate kinase</fullName>
        <shortName evidence="1">NDK</shortName>
        <shortName evidence="1">NDP kinase</shortName>
        <ecNumber evidence="1">2.7.4.6</ecNumber>
    </recommendedName>
    <alternativeName>
        <fullName evidence="1">Nucleoside-2-P kinase</fullName>
    </alternativeName>
</protein>
<accession>Q9PJP1</accession>
<proteinExistence type="inferred from homology"/>